<reference key="1">
    <citation type="journal article" date="2009" name="Genome Res.">
        <title>Genome structure of a Saccharomyces cerevisiae strain widely used in bioethanol production.</title>
        <authorList>
            <person name="Argueso J.L."/>
            <person name="Carazzolle M.F."/>
            <person name="Mieczkowski P.A."/>
            <person name="Duarte F.M."/>
            <person name="Netto O.V.C."/>
            <person name="Missawa S.K."/>
            <person name="Galzerani F."/>
            <person name="Costa G.G.L."/>
            <person name="Vidal R.O."/>
            <person name="Noronha M.F."/>
            <person name="Dominska M."/>
            <person name="Andrietta M.G.S."/>
            <person name="Andrietta S.R."/>
            <person name="Cunha A.F."/>
            <person name="Gomes L.H."/>
            <person name="Tavares F.C.A."/>
            <person name="Alcarde A.R."/>
            <person name="Dietrich F.S."/>
            <person name="McCusker J.H."/>
            <person name="Petes T.D."/>
            <person name="Pereira G.A.G."/>
        </authorList>
    </citation>
    <scope>NUCLEOTIDE SEQUENCE [LARGE SCALE GENOMIC DNA]</scope>
    <source>
        <strain>JAY291</strain>
    </source>
</reference>
<evidence type="ECO:0000250" key="1">
    <source>
        <dbReference type="UniProtKB" id="P23248"/>
    </source>
</evidence>
<evidence type="ECO:0000250" key="2">
    <source>
        <dbReference type="UniProtKB" id="P33442"/>
    </source>
</evidence>
<evidence type="ECO:0000255" key="3">
    <source>
        <dbReference type="HAMAP-Rule" id="MF_03122"/>
    </source>
</evidence>
<evidence type="ECO:0000305" key="4"/>
<comment type="subunit">
    <text evidence="3">Component of the small ribosomal subunit. Mature ribosomes consist of a small (40S) and a large (60S) subunit. The 40S subunit contains about 33 different proteins and 1 molecule of RNA (18S). The 60S subunit contains about 49 different proteins and 3 molecules of RNA (25S, 5.8S and 5S).</text>
</comment>
<comment type="subcellular location">
    <subcellularLocation>
        <location evidence="3">Cytoplasm</location>
    </subcellularLocation>
</comment>
<comment type="similarity">
    <text evidence="3">Belongs to the eukaryotic ribosomal protein eS1 family.</text>
</comment>
<name>RS3A2_YEAS2</name>
<accession>C7GVZ9</accession>
<dbReference type="EMBL" id="ACFL01000366">
    <property type="protein sequence ID" value="EEU05005.1"/>
    <property type="molecule type" value="Genomic_DNA"/>
</dbReference>
<dbReference type="SMR" id="C7GVZ9"/>
<dbReference type="OrthoDB" id="24542at4893"/>
<dbReference type="Proteomes" id="UP000008073">
    <property type="component" value="Unassembled WGS sequence"/>
</dbReference>
<dbReference type="GO" id="GO:0022627">
    <property type="term" value="C:cytosolic small ribosomal subunit"/>
    <property type="evidence" value="ECO:0007669"/>
    <property type="project" value="UniProtKB-UniRule"/>
</dbReference>
<dbReference type="GO" id="GO:0003735">
    <property type="term" value="F:structural constituent of ribosome"/>
    <property type="evidence" value="ECO:0007669"/>
    <property type="project" value="UniProtKB-UniRule"/>
</dbReference>
<dbReference type="GO" id="GO:0006412">
    <property type="term" value="P:translation"/>
    <property type="evidence" value="ECO:0007669"/>
    <property type="project" value="UniProtKB-UniRule"/>
</dbReference>
<dbReference type="HAMAP" id="MF_03122">
    <property type="entry name" value="Ribosomal_eS1_euk"/>
    <property type="match status" value="1"/>
</dbReference>
<dbReference type="InterPro" id="IPR001593">
    <property type="entry name" value="Ribosomal_eS1"/>
</dbReference>
<dbReference type="InterPro" id="IPR018281">
    <property type="entry name" value="Ribosomal_eS1_CS"/>
</dbReference>
<dbReference type="InterPro" id="IPR027500">
    <property type="entry name" value="Ribosomal_eS1_euk"/>
</dbReference>
<dbReference type="PANTHER" id="PTHR11830">
    <property type="entry name" value="40S RIBOSOMAL PROTEIN S3A"/>
    <property type="match status" value="1"/>
</dbReference>
<dbReference type="Pfam" id="PF01015">
    <property type="entry name" value="Ribosomal_S3Ae"/>
    <property type="match status" value="1"/>
</dbReference>
<dbReference type="SMART" id="SM01397">
    <property type="entry name" value="Ribosomal_S3Ae"/>
    <property type="match status" value="1"/>
</dbReference>
<dbReference type="PROSITE" id="PS01191">
    <property type="entry name" value="RIBOSOMAL_S3AE"/>
    <property type="match status" value="1"/>
</dbReference>
<keyword id="KW-0007">Acetylation</keyword>
<keyword id="KW-0963">Cytoplasm</keyword>
<keyword id="KW-1017">Isopeptide bond</keyword>
<keyword id="KW-0597">Phosphoprotein</keyword>
<keyword id="KW-0687">Ribonucleoprotein</keyword>
<keyword id="KW-0689">Ribosomal protein</keyword>
<keyword id="KW-0832">Ubl conjugation</keyword>
<sequence>MAVGKNKRLSRGKKGLKKKVVDPFTRKEWFDIKAPSTFENRNVGKTLVNKSTGLKNASDALKGRVVEVCLADLQGSEDHSFRKVKLRVDEVQGKNLLTNFHGMDFTTDKLRSMVRKWQTLIEANVTVKTSDDYVLRIFAIAFTRKQANQVKRHSYAQSSHIRAIRKVISEILTREVQNSTLAQLTSKLIPEVINKEIENATKDIFPLQNIHVRKVKLLKQPKFDVGALMALHGEGSGKEKGKKVSGFKDEVLETV</sequence>
<organism>
    <name type="scientific">Saccharomyces cerevisiae (strain JAY291)</name>
    <name type="common">Baker's yeast</name>
    <dbReference type="NCBI Taxonomy" id="574961"/>
    <lineage>
        <taxon>Eukaryota</taxon>
        <taxon>Fungi</taxon>
        <taxon>Dikarya</taxon>
        <taxon>Ascomycota</taxon>
        <taxon>Saccharomycotina</taxon>
        <taxon>Saccharomycetes</taxon>
        <taxon>Saccharomycetales</taxon>
        <taxon>Saccharomycetaceae</taxon>
        <taxon>Saccharomyces</taxon>
    </lineage>
</organism>
<proteinExistence type="inferred from homology"/>
<gene>
    <name evidence="3" type="primary">RPS1B</name>
    <name type="ORF">C1Q_04660</name>
</gene>
<protein>
    <recommendedName>
        <fullName evidence="3">Small ribosomal subunit protein eS1B</fullName>
    </recommendedName>
    <alternativeName>
        <fullName evidence="4">40S ribosomal protein S1-B</fullName>
    </alternativeName>
</protein>
<feature type="initiator methionine" description="Removed" evidence="3">
    <location>
        <position position="1"/>
    </location>
</feature>
<feature type="chain" id="PRO_0000389407" description="Small ribosomal subunit protein eS1B">
    <location>
        <begin position="2"/>
        <end position="255"/>
    </location>
</feature>
<feature type="modified residue" description="N-acetylalanine; partial" evidence="2 3">
    <location>
        <position position="2"/>
    </location>
</feature>
<feature type="modified residue" description="Phosphoserine" evidence="1">
    <location>
        <position position="245"/>
    </location>
</feature>
<feature type="modified residue" description="Phosphothreonine" evidence="1">
    <location>
        <position position="254"/>
    </location>
</feature>
<feature type="cross-link" description="Glycyl lysine isopeptide (Lys-Gly) (interchain with G-Cter in ubiquitin)" evidence="1">
    <location>
        <position position="248"/>
    </location>
</feature>